<keyword id="KW-0028">Amino-acid biosynthesis</keyword>
<keyword id="KW-0057">Aromatic amino acid biosynthesis</keyword>
<keyword id="KW-0456">Lyase</keyword>
<keyword id="KW-1185">Reference proteome</keyword>
<keyword id="KW-0704">Schiff base</keyword>
<dbReference type="EC" id="4.2.1.10" evidence="1"/>
<dbReference type="EMBL" id="AL935263">
    <property type="protein sequence ID" value="CCC80461.1"/>
    <property type="molecule type" value="Genomic_DNA"/>
</dbReference>
<dbReference type="RefSeq" id="WP_011102187.1">
    <property type="nucleotide sequence ID" value="NC_004567.2"/>
</dbReference>
<dbReference type="RefSeq" id="YP_004890975.1">
    <property type="nucleotide sequence ID" value="NC_004567.2"/>
</dbReference>
<dbReference type="SMR" id="Q88SD8"/>
<dbReference type="STRING" id="220668.lp_3493"/>
<dbReference type="EnsemblBacteria" id="CCC80461">
    <property type="protein sequence ID" value="CCC80461"/>
    <property type="gene ID" value="lp_3493"/>
</dbReference>
<dbReference type="KEGG" id="lpl:lp_3493"/>
<dbReference type="PATRIC" id="fig|220668.9.peg.2909"/>
<dbReference type="eggNOG" id="COG0710">
    <property type="taxonomic scope" value="Bacteria"/>
</dbReference>
<dbReference type="HOGENOM" id="CLU_064444_0_0_9"/>
<dbReference type="OrthoDB" id="9813659at2"/>
<dbReference type="PhylomeDB" id="Q88SD8"/>
<dbReference type="UniPathway" id="UPA00053">
    <property type="reaction ID" value="UER00086"/>
</dbReference>
<dbReference type="Proteomes" id="UP000000432">
    <property type="component" value="Chromosome"/>
</dbReference>
<dbReference type="GO" id="GO:0003855">
    <property type="term" value="F:3-dehydroquinate dehydratase activity"/>
    <property type="evidence" value="ECO:0007669"/>
    <property type="project" value="UniProtKB-UniRule"/>
</dbReference>
<dbReference type="GO" id="GO:0046279">
    <property type="term" value="P:3,4-dihydroxybenzoate biosynthetic process"/>
    <property type="evidence" value="ECO:0007669"/>
    <property type="project" value="UniProtKB-ARBA"/>
</dbReference>
<dbReference type="GO" id="GO:0008652">
    <property type="term" value="P:amino acid biosynthetic process"/>
    <property type="evidence" value="ECO:0007669"/>
    <property type="project" value="UniProtKB-KW"/>
</dbReference>
<dbReference type="GO" id="GO:0009073">
    <property type="term" value="P:aromatic amino acid family biosynthetic process"/>
    <property type="evidence" value="ECO:0007669"/>
    <property type="project" value="UniProtKB-KW"/>
</dbReference>
<dbReference type="GO" id="GO:0009423">
    <property type="term" value="P:chorismate biosynthetic process"/>
    <property type="evidence" value="ECO:0007669"/>
    <property type="project" value="UniProtKB-UniRule"/>
</dbReference>
<dbReference type="CDD" id="cd00502">
    <property type="entry name" value="DHQase_I"/>
    <property type="match status" value="1"/>
</dbReference>
<dbReference type="FunFam" id="3.20.20.70:FF:000047">
    <property type="entry name" value="3-dehydroquinate dehydratase"/>
    <property type="match status" value="1"/>
</dbReference>
<dbReference type="Gene3D" id="3.20.20.70">
    <property type="entry name" value="Aldolase class I"/>
    <property type="match status" value="1"/>
</dbReference>
<dbReference type="HAMAP" id="MF_00214">
    <property type="entry name" value="AroD"/>
    <property type="match status" value="1"/>
</dbReference>
<dbReference type="InterPro" id="IPR013785">
    <property type="entry name" value="Aldolase_TIM"/>
</dbReference>
<dbReference type="InterPro" id="IPR001381">
    <property type="entry name" value="DHquinase_I"/>
</dbReference>
<dbReference type="InterPro" id="IPR050146">
    <property type="entry name" value="Type-I_3-dehydroquinase"/>
</dbReference>
<dbReference type="NCBIfam" id="TIGR01093">
    <property type="entry name" value="aroD"/>
    <property type="match status" value="1"/>
</dbReference>
<dbReference type="PANTHER" id="PTHR43699">
    <property type="entry name" value="3-DEHYDROQUINATE DEHYDRATASE"/>
    <property type="match status" value="1"/>
</dbReference>
<dbReference type="PANTHER" id="PTHR43699:SF1">
    <property type="entry name" value="3-DEHYDROQUINATE DEHYDRATASE"/>
    <property type="match status" value="1"/>
</dbReference>
<dbReference type="Pfam" id="PF01487">
    <property type="entry name" value="DHquinase_I"/>
    <property type="match status" value="1"/>
</dbReference>
<dbReference type="SUPFAM" id="SSF51569">
    <property type="entry name" value="Aldolase"/>
    <property type="match status" value="1"/>
</dbReference>
<evidence type="ECO:0000255" key="1">
    <source>
        <dbReference type="HAMAP-Rule" id="MF_00214"/>
    </source>
</evidence>
<sequence>MQPAIKLRNIELGSCRPKLAVPITGTTINDILAATTPILAAQPDVVEWRIDFFKDVTNPEQLKSAGQQLRQALGDIALLTTFRTKGEGGELALSDTEYFKLCETVLDGGFTDALDVERYHDEQAVKQIVAAAHEHQVVVIMSNHDFDKTPAVAEIVKRLTSMVDYGADVAKMAVMPQSVEDVLTLLTATNIARQTLPQPVITMSMGDLGKVSRLAGEVFGSCLSFATVGAASAPGQIALENLRPELEDLKLN</sequence>
<gene>
    <name evidence="1" type="primary">aroD</name>
    <name type="ordered locus">lp_3493</name>
</gene>
<feature type="chain" id="PRO_0000138798" description="3-dehydroquinate dehydratase">
    <location>
        <begin position="1"/>
        <end position="252"/>
    </location>
</feature>
<feature type="active site" description="Proton donor/acceptor" evidence="1">
    <location>
        <position position="144"/>
    </location>
</feature>
<feature type="active site" description="Schiff-base intermediate with substrate" evidence="1">
    <location>
        <position position="171"/>
    </location>
</feature>
<feature type="binding site" evidence="1">
    <location>
        <begin position="47"/>
        <end position="49"/>
    </location>
    <ligand>
        <name>3-dehydroquinate</name>
        <dbReference type="ChEBI" id="CHEBI:32364"/>
    </ligand>
</feature>
<feature type="binding site" evidence="1">
    <location>
        <position position="83"/>
    </location>
    <ligand>
        <name>3-dehydroquinate</name>
        <dbReference type="ChEBI" id="CHEBI:32364"/>
    </ligand>
</feature>
<feature type="binding site" evidence="1">
    <location>
        <position position="213"/>
    </location>
    <ligand>
        <name>3-dehydroquinate</name>
        <dbReference type="ChEBI" id="CHEBI:32364"/>
    </ligand>
</feature>
<feature type="binding site" evidence="1">
    <location>
        <position position="232"/>
    </location>
    <ligand>
        <name>3-dehydroquinate</name>
        <dbReference type="ChEBI" id="CHEBI:32364"/>
    </ligand>
</feature>
<feature type="binding site" evidence="1">
    <location>
        <position position="236"/>
    </location>
    <ligand>
        <name>3-dehydroquinate</name>
        <dbReference type="ChEBI" id="CHEBI:32364"/>
    </ligand>
</feature>
<proteinExistence type="inferred from homology"/>
<protein>
    <recommendedName>
        <fullName evidence="1">3-dehydroquinate dehydratase</fullName>
        <shortName evidence="1">3-dehydroquinase</shortName>
        <ecNumber evidence="1">4.2.1.10</ecNumber>
    </recommendedName>
    <alternativeName>
        <fullName evidence="1">Type I DHQase</fullName>
    </alternativeName>
    <alternativeName>
        <fullName evidence="1">Type I dehydroquinase</fullName>
        <shortName evidence="1">DHQ1</shortName>
    </alternativeName>
</protein>
<comment type="function">
    <text evidence="1">Involved in the third step of the chorismate pathway, which leads to the biosynthesis of aromatic amino acids. Catalyzes the cis-dehydration of 3-dehydroquinate (DHQ) and introduces the first double bond of the aromatic ring to yield 3-dehydroshikimate.</text>
</comment>
<comment type="catalytic activity">
    <reaction evidence="1">
        <text>3-dehydroquinate = 3-dehydroshikimate + H2O</text>
        <dbReference type="Rhea" id="RHEA:21096"/>
        <dbReference type="ChEBI" id="CHEBI:15377"/>
        <dbReference type="ChEBI" id="CHEBI:16630"/>
        <dbReference type="ChEBI" id="CHEBI:32364"/>
        <dbReference type="EC" id="4.2.1.10"/>
    </reaction>
</comment>
<comment type="pathway">
    <text evidence="1">Metabolic intermediate biosynthesis; chorismate biosynthesis; chorismate from D-erythrose 4-phosphate and phosphoenolpyruvate: step 3/7.</text>
</comment>
<comment type="subunit">
    <text evidence="1">Homodimer.</text>
</comment>
<comment type="similarity">
    <text evidence="1">Belongs to the type-I 3-dehydroquinase family.</text>
</comment>
<reference key="1">
    <citation type="journal article" date="2003" name="Proc. Natl. Acad. Sci. U.S.A.">
        <title>Complete genome sequence of Lactobacillus plantarum WCFS1.</title>
        <authorList>
            <person name="Kleerebezem M."/>
            <person name="Boekhorst J."/>
            <person name="van Kranenburg R."/>
            <person name="Molenaar D."/>
            <person name="Kuipers O.P."/>
            <person name="Leer R."/>
            <person name="Tarchini R."/>
            <person name="Peters S.A."/>
            <person name="Sandbrink H.M."/>
            <person name="Fiers M.W.E.J."/>
            <person name="Stiekema W."/>
            <person name="Klein Lankhorst R.M."/>
            <person name="Bron P.A."/>
            <person name="Hoffer S.M."/>
            <person name="Nierop Groot M.N."/>
            <person name="Kerkhoven R."/>
            <person name="De Vries M."/>
            <person name="Ursing B."/>
            <person name="De Vos W.M."/>
            <person name="Siezen R.J."/>
        </authorList>
    </citation>
    <scope>NUCLEOTIDE SEQUENCE [LARGE SCALE GENOMIC DNA]</scope>
    <source>
        <strain>ATCC BAA-793 / NCIMB 8826 / WCFS1</strain>
    </source>
</reference>
<reference key="2">
    <citation type="journal article" date="2012" name="J. Bacteriol.">
        <title>Complete resequencing and reannotation of the Lactobacillus plantarum WCFS1 genome.</title>
        <authorList>
            <person name="Siezen R.J."/>
            <person name="Francke C."/>
            <person name="Renckens B."/>
            <person name="Boekhorst J."/>
            <person name="Wels M."/>
            <person name="Kleerebezem M."/>
            <person name="van Hijum S.A."/>
        </authorList>
    </citation>
    <scope>NUCLEOTIDE SEQUENCE [LARGE SCALE GENOMIC DNA]</scope>
    <scope>GENOME REANNOTATION</scope>
    <source>
        <strain>ATCC BAA-793 / NCIMB 8826 / WCFS1</strain>
    </source>
</reference>
<organism>
    <name type="scientific">Lactiplantibacillus plantarum (strain ATCC BAA-793 / NCIMB 8826 / WCFS1)</name>
    <name type="common">Lactobacillus plantarum</name>
    <dbReference type="NCBI Taxonomy" id="220668"/>
    <lineage>
        <taxon>Bacteria</taxon>
        <taxon>Bacillati</taxon>
        <taxon>Bacillota</taxon>
        <taxon>Bacilli</taxon>
        <taxon>Lactobacillales</taxon>
        <taxon>Lactobacillaceae</taxon>
        <taxon>Lactiplantibacillus</taxon>
    </lineage>
</organism>
<name>AROD_LACPL</name>
<accession>Q88SD8</accession>
<accession>F9UUF9</accession>